<accession>Q8ZKW0</accession>
<name>RBSD_SALTY</name>
<reference key="1">
    <citation type="journal article" date="2001" name="Nature">
        <title>Complete genome sequence of Salmonella enterica serovar Typhimurium LT2.</title>
        <authorList>
            <person name="McClelland M."/>
            <person name="Sanderson K.E."/>
            <person name="Spieth J."/>
            <person name="Clifton S.W."/>
            <person name="Latreille P."/>
            <person name="Courtney L."/>
            <person name="Porwollik S."/>
            <person name="Ali J."/>
            <person name="Dante M."/>
            <person name="Du F."/>
            <person name="Hou S."/>
            <person name="Layman D."/>
            <person name="Leonard S."/>
            <person name="Nguyen C."/>
            <person name="Scott K."/>
            <person name="Holmes A."/>
            <person name="Grewal N."/>
            <person name="Mulvaney E."/>
            <person name="Ryan E."/>
            <person name="Sun H."/>
            <person name="Florea L."/>
            <person name="Miller W."/>
            <person name="Stoneking T."/>
            <person name="Nhan M."/>
            <person name="Waterston R."/>
            <person name="Wilson R.K."/>
        </authorList>
    </citation>
    <scope>NUCLEOTIDE SEQUENCE [LARGE SCALE GENOMIC DNA]</scope>
    <source>
        <strain>LT2 / SGSC1412 / ATCC 700720</strain>
    </source>
</reference>
<evidence type="ECO:0000255" key="1">
    <source>
        <dbReference type="HAMAP-Rule" id="MF_01661"/>
    </source>
</evidence>
<evidence type="ECO:0007829" key="2">
    <source>
        <dbReference type="PDB" id="3E7N"/>
    </source>
</evidence>
<protein>
    <recommendedName>
        <fullName evidence="1">D-ribose pyranase</fullName>
        <ecNumber evidence="1">5.4.99.62</ecNumber>
    </recommendedName>
</protein>
<comment type="function">
    <text evidence="1">Catalyzes the interconversion of beta-pyran and beta-furan forms of D-ribose.</text>
</comment>
<comment type="catalytic activity">
    <reaction evidence="1">
        <text>beta-D-ribopyranose = beta-D-ribofuranose</text>
        <dbReference type="Rhea" id="RHEA:25432"/>
        <dbReference type="ChEBI" id="CHEBI:27476"/>
        <dbReference type="ChEBI" id="CHEBI:47002"/>
        <dbReference type="EC" id="5.4.99.62"/>
    </reaction>
</comment>
<comment type="pathway">
    <text evidence="1">Carbohydrate metabolism; D-ribose degradation; D-ribose 5-phosphate from beta-D-ribopyranose: step 1/2.</text>
</comment>
<comment type="subunit">
    <text evidence="1">Homodecamer.</text>
</comment>
<comment type="subcellular location">
    <subcellularLocation>
        <location evidence="1">Cytoplasm</location>
    </subcellularLocation>
</comment>
<comment type="similarity">
    <text evidence="1">Belongs to the RbsD / FucU family. RbsD subfamily.</text>
</comment>
<keyword id="KW-0002">3D-structure</keyword>
<keyword id="KW-0119">Carbohydrate metabolism</keyword>
<keyword id="KW-0963">Cytoplasm</keyword>
<keyword id="KW-0413">Isomerase</keyword>
<keyword id="KW-1185">Reference proteome</keyword>
<organism>
    <name type="scientific">Salmonella typhimurium (strain LT2 / SGSC1412 / ATCC 700720)</name>
    <dbReference type="NCBI Taxonomy" id="99287"/>
    <lineage>
        <taxon>Bacteria</taxon>
        <taxon>Pseudomonadati</taxon>
        <taxon>Pseudomonadota</taxon>
        <taxon>Gammaproteobacteria</taxon>
        <taxon>Enterobacterales</taxon>
        <taxon>Enterobacteriaceae</taxon>
        <taxon>Salmonella</taxon>
    </lineage>
</organism>
<proteinExistence type="evidence at protein level"/>
<feature type="chain" id="PRO_0000346253" description="D-ribose pyranase">
    <location>
        <begin position="1"/>
        <end position="139"/>
    </location>
</feature>
<feature type="active site" description="Proton donor" evidence="1">
    <location>
        <position position="20"/>
    </location>
</feature>
<feature type="binding site" evidence="1">
    <location>
        <position position="28"/>
    </location>
    <ligand>
        <name>substrate</name>
    </ligand>
</feature>
<feature type="binding site" evidence="1">
    <location>
        <position position="106"/>
    </location>
    <ligand>
        <name>substrate</name>
    </ligand>
</feature>
<feature type="binding site" evidence="1">
    <location>
        <begin position="128"/>
        <end position="130"/>
    </location>
    <ligand>
        <name>substrate</name>
    </ligand>
</feature>
<feature type="strand" evidence="2">
    <location>
        <begin position="1"/>
        <end position="5"/>
    </location>
</feature>
<feature type="helix" evidence="2">
    <location>
        <begin position="9"/>
        <end position="17"/>
    </location>
</feature>
<feature type="strand" evidence="2">
    <location>
        <begin position="23"/>
        <end position="27"/>
    </location>
</feature>
<feature type="strand" evidence="2">
    <location>
        <begin position="37"/>
        <end position="41"/>
    </location>
</feature>
<feature type="helix" evidence="2">
    <location>
        <begin position="51"/>
        <end position="61"/>
    </location>
</feature>
<feature type="strand" evidence="2">
    <location>
        <begin position="64"/>
        <end position="70"/>
    </location>
</feature>
<feature type="helix" evidence="2">
    <location>
        <begin position="73"/>
        <end position="76"/>
    </location>
</feature>
<feature type="helix" evidence="2">
    <location>
        <begin position="78"/>
        <end position="95"/>
    </location>
</feature>
<feature type="strand" evidence="2">
    <location>
        <begin position="100"/>
        <end position="104"/>
    </location>
</feature>
<feature type="helix" evidence="2">
    <location>
        <begin position="106"/>
        <end position="113"/>
    </location>
</feature>
<feature type="strand" evidence="2">
    <location>
        <begin position="116"/>
        <end position="121"/>
    </location>
</feature>
<feature type="strand" evidence="2">
    <location>
        <begin position="131"/>
        <end position="135"/>
    </location>
</feature>
<sequence>MKKGTVLNSEISSVISRLGHTDTLVVCDAGLPIPNSTARIDMALTQGVPSFMQVVDVVTREMQVEAAILATEIKQQNPQLHETLLTHLEQLQQHQGNTIKISYTTHEQFKKLTADSQAVIRSGECSPYANVILCAGVTF</sequence>
<gene>
    <name evidence="1" type="primary">rbsD</name>
    <name type="ordered locus">STM3881</name>
</gene>
<dbReference type="EC" id="5.4.99.62" evidence="1"/>
<dbReference type="EMBL" id="AE006468">
    <property type="protein sequence ID" value="AAL22739.1"/>
    <property type="molecule type" value="Genomic_DNA"/>
</dbReference>
<dbReference type="RefSeq" id="NP_462780.1">
    <property type="nucleotide sequence ID" value="NC_003197.2"/>
</dbReference>
<dbReference type="RefSeq" id="WP_000715944.1">
    <property type="nucleotide sequence ID" value="NC_003197.2"/>
</dbReference>
<dbReference type="PDB" id="3E7N">
    <property type="method" value="X-ray"/>
    <property type="resolution" value="2.45 A"/>
    <property type="chains" value="A/B/C/D/E/F/G/H/I/J/K/L/M/N/O=1-139"/>
</dbReference>
<dbReference type="PDBsum" id="3E7N"/>
<dbReference type="SMR" id="Q8ZKW0"/>
<dbReference type="STRING" id="99287.STM3881"/>
<dbReference type="PaxDb" id="99287-STM3881"/>
<dbReference type="GeneID" id="1255408"/>
<dbReference type="KEGG" id="stm:STM3881"/>
<dbReference type="PATRIC" id="fig|99287.12.peg.4111"/>
<dbReference type="HOGENOM" id="CLU_135498_0_0_6"/>
<dbReference type="OMA" id="EQTPYAN"/>
<dbReference type="PhylomeDB" id="Q8ZKW0"/>
<dbReference type="BioCyc" id="SENT99287:STM3881-MONOMER"/>
<dbReference type="UniPathway" id="UPA00916">
    <property type="reaction ID" value="UER00888"/>
</dbReference>
<dbReference type="EvolutionaryTrace" id="Q8ZKW0"/>
<dbReference type="Proteomes" id="UP000001014">
    <property type="component" value="Chromosome"/>
</dbReference>
<dbReference type="GO" id="GO:0005829">
    <property type="term" value="C:cytosol"/>
    <property type="evidence" value="ECO:0000318"/>
    <property type="project" value="GO_Central"/>
</dbReference>
<dbReference type="GO" id="GO:0062193">
    <property type="term" value="F:D-ribose pyranase activity"/>
    <property type="evidence" value="ECO:0007669"/>
    <property type="project" value="UniProtKB-EC"/>
</dbReference>
<dbReference type="GO" id="GO:0016872">
    <property type="term" value="F:intramolecular lyase activity"/>
    <property type="evidence" value="ECO:0007669"/>
    <property type="project" value="UniProtKB-UniRule"/>
</dbReference>
<dbReference type="GO" id="GO:0016866">
    <property type="term" value="F:intramolecular transferase activity"/>
    <property type="evidence" value="ECO:0000318"/>
    <property type="project" value="GO_Central"/>
</dbReference>
<dbReference type="GO" id="GO:0048029">
    <property type="term" value="F:monosaccharide binding"/>
    <property type="evidence" value="ECO:0007669"/>
    <property type="project" value="InterPro"/>
</dbReference>
<dbReference type="GO" id="GO:0019303">
    <property type="term" value="P:D-ribose catabolic process"/>
    <property type="evidence" value="ECO:0000318"/>
    <property type="project" value="GO_Central"/>
</dbReference>
<dbReference type="FunFam" id="3.40.1650.10:FF:000002">
    <property type="entry name" value="D-ribose pyranase"/>
    <property type="match status" value="1"/>
</dbReference>
<dbReference type="Gene3D" id="3.40.1650.10">
    <property type="entry name" value="RbsD-like domain"/>
    <property type="match status" value="1"/>
</dbReference>
<dbReference type="HAMAP" id="MF_01661">
    <property type="entry name" value="D_rib_pyranase"/>
    <property type="match status" value="1"/>
</dbReference>
<dbReference type="InterPro" id="IPR023064">
    <property type="entry name" value="D-ribose_pyranase"/>
</dbReference>
<dbReference type="InterPro" id="IPR023750">
    <property type="entry name" value="RbsD-like_sf"/>
</dbReference>
<dbReference type="InterPro" id="IPR007721">
    <property type="entry name" value="RbsD_FucU"/>
</dbReference>
<dbReference type="NCBIfam" id="NF008761">
    <property type="entry name" value="PRK11797.1"/>
    <property type="match status" value="1"/>
</dbReference>
<dbReference type="PANTHER" id="PTHR37831">
    <property type="entry name" value="D-RIBOSE PYRANASE"/>
    <property type="match status" value="1"/>
</dbReference>
<dbReference type="PANTHER" id="PTHR37831:SF1">
    <property type="entry name" value="D-RIBOSE PYRANASE"/>
    <property type="match status" value="1"/>
</dbReference>
<dbReference type="Pfam" id="PF05025">
    <property type="entry name" value="RbsD_FucU"/>
    <property type="match status" value="1"/>
</dbReference>
<dbReference type="SUPFAM" id="SSF102546">
    <property type="entry name" value="RbsD-like"/>
    <property type="match status" value="1"/>
</dbReference>